<dbReference type="EMBL" id="AF151430">
    <property type="protein sequence ID" value="AAF80167.1"/>
    <property type="status" value="ALT_INIT"/>
    <property type="molecule type" value="mRNA"/>
</dbReference>
<dbReference type="EMBL" id="AF151428">
    <property type="protein sequence ID" value="AAF80165.1"/>
    <property type="status" value="ALT_INIT"/>
    <property type="molecule type" value="mRNA"/>
</dbReference>
<dbReference type="SMR" id="Q9LD79"/>
<dbReference type="Allergome" id="3344">
    <property type="allergen name" value="Jun v 3.0101"/>
</dbReference>
<dbReference type="Allergome" id="3345">
    <property type="allergen name" value="Jun v 3.0102"/>
</dbReference>
<dbReference type="Allergome" id="776">
    <property type="allergen name" value="Jun v 3"/>
</dbReference>
<dbReference type="GO" id="GO:0006952">
    <property type="term" value="P:defense response"/>
    <property type="evidence" value="ECO:0007669"/>
    <property type="project" value="UniProtKB-KW"/>
</dbReference>
<dbReference type="Gene3D" id="2.60.110.10">
    <property type="entry name" value="Thaumatin"/>
    <property type="match status" value="1"/>
</dbReference>
<dbReference type="InterPro" id="IPR037176">
    <property type="entry name" value="Osmotin/thaumatin-like_sf"/>
</dbReference>
<dbReference type="InterPro" id="IPR001938">
    <property type="entry name" value="Thaumatin"/>
</dbReference>
<dbReference type="InterPro" id="IPR017949">
    <property type="entry name" value="Thaumatin_CS"/>
</dbReference>
<dbReference type="PANTHER" id="PTHR31048">
    <property type="entry name" value="OS03G0233200 PROTEIN"/>
    <property type="match status" value="1"/>
</dbReference>
<dbReference type="Pfam" id="PF00314">
    <property type="entry name" value="Thaumatin"/>
    <property type="match status" value="1"/>
</dbReference>
<dbReference type="PIRSF" id="PIRSF002703">
    <property type="entry name" value="Thaumatin"/>
    <property type="match status" value="1"/>
</dbReference>
<dbReference type="PRINTS" id="PR00347">
    <property type="entry name" value="THAUMATIN"/>
</dbReference>
<dbReference type="SMART" id="SM00205">
    <property type="entry name" value="THN"/>
    <property type="match status" value="1"/>
</dbReference>
<dbReference type="SUPFAM" id="SSF49870">
    <property type="entry name" value="Osmotin, thaumatin-like protein"/>
    <property type="match status" value="1"/>
</dbReference>
<dbReference type="PROSITE" id="PS00316">
    <property type="entry name" value="THAUMATIN_1"/>
    <property type="match status" value="1"/>
</dbReference>
<dbReference type="PROSITE" id="PS51367">
    <property type="entry name" value="THAUMATIN_2"/>
    <property type="match status" value="1"/>
</dbReference>
<feature type="signal peptide" evidence="2">
    <location>
        <begin position="1" status="less than"/>
        <end position="19"/>
    </location>
</feature>
<feature type="chain" id="PRO_0000034031" description="Pathogenesis-related protein" evidence="2">
    <location>
        <begin position="20"/>
        <end position="110"/>
    </location>
</feature>
<feature type="non-terminal residue" evidence="4">
    <location>
        <position position="1"/>
    </location>
</feature>
<evidence type="ECO:0000255" key="1">
    <source>
        <dbReference type="PROSITE-ProRule" id="PRU00699"/>
    </source>
</evidence>
<evidence type="ECO:0000269" key="2">
    <source>
    </source>
</evidence>
<evidence type="ECO:0000303" key="3">
    <source>
    </source>
</evidence>
<evidence type="ECO:0000305" key="4"/>
<evidence type="ECO:0000312" key="5">
    <source>
        <dbReference type="EMBL" id="AAF80167.1"/>
    </source>
</evidence>
<accession>Q9LD79</accession>
<protein>
    <recommendedName>
        <fullName>Pathogenesis-related protein</fullName>
    </recommendedName>
    <alternativeName>
        <fullName>Putative major pollen allergen Jun v 3</fullName>
    </alternativeName>
    <allergenName>Jun v 3</allergenName>
</protein>
<comment type="allergen">
    <text evidence="3">This protein is similar to other pollen allergens but is truncated and lacks the IgE binding epitopes found in similar proteins so may not be allergenic.</text>
</comment>
<comment type="similarity">
    <text evidence="1">Belongs to the thaumatin family.</text>
</comment>
<comment type="caution">
    <text evidence="3">It is uncertain whether a Met upstream of this sequence or Met-14 is the initiator.</text>
</comment>
<comment type="sequence caution" evidence="4">
    <conflict type="erroneous initiation">
        <sequence resource="EMBL-CDS" id="AAF80165"/>
    </conflict>
</comment>
<comment type="sequence caution" evidence="4">
    <conflict type="erroneous initiation">
        <sequence resource="EMBL-CDS" id="AAF80167"/>
    </conflict>
</comment>
<proteinExistence type="evidence at protein level"/>
<organism>
    <name type="scientific">Juniperus virginiana</name>
    <name type="common">Eastern redcedar</name>
    <name type="synonym">Sabina virginiana</name>
    <dbReference type="NCBI Taxonomy" id="39584"/>
    <lineage>
        <taxon>Eukaryota</taxon>
        <taxon>Viridiplantae</taxon>
        <taxon>Streptophyta</taxon>
        <taxon>Embryophyta</taxon>
        <taxon>Tracheophyta</taxon>
        <taxon>Spermatophyta</taxon>
        <taxon>Pinopsida</taxon>
        <taxon>Pinidae</taxon>
        <taxon>Conifers II</taxon>
        <taxon>Cupressales</taxon>
        <taxon>Cupressaceae</taxon>
        <taxon>Juniperus</taxon>
    </lineage>
</organism>
<sequence>AFLLAATLTISSHMQEAGAVKFDIKNQCGYTVWAAGLPGGGKRLDQGQTWTVNLAAGTASARFWGRTGCTFDASGKGSCQTGDCGRQLSCTVSGAVPATLAEYTQSDQDY</sequence>
<name>PRR3_JUNVI</name>
<keyword id="KW-0020">Allergen</keyword>
<keyword id="KW-0903">Direct protein sequencing</keyword>
<keyword id="KW-0568">Pathogenesis-related protein</keyword>
<keyword id="KW-0611">Plant defense</keyword>
<keyword id="KW-0732">Signal</keyword>
<reference evidence="4 5" key="1">
    <citation type="journal article" date="2001" name="Clin. Exp. Allergy">
        <title>Identification of mutations in the genes for the pollen allergens of eastern red cedar (Juniperus virginiana).</title>
        <authorList>
            <person name="Midoro-Horiuti T."/>
            <person name="Goldblum R.M."/>
            <person name="Brooks E.G."/>
        </authorList>
    </citation>
    <scope>NUCLEOTIDE SEQUENCE [MRNA]</scope>
    <scope>PROTEIN SEQUENCE OF 20-24</scope>
    <source>
        <tissue evidence="2">Pollen</tissue>
    </source>
</reference>